<feature type="chain" id="PRO_0000046585" description="B-cell differentiation antigen CD72">
    <location>
        <begin position="1"/>
        <end position="359"/>
    </location>
</feature>
<feature type="topological domain" description="Cytoplasmic" evidence="2">
    <location>
        <begin position="1"/>
        <end position="95"/>
    </location>
</feature>
<feature type="transmembrane region" description="Helical; Signal-anchor for type II membrane protein" evidence="2">
    <location>
        <begin position="96"/>
        <end position="116"/>
    </location>
</feature>
<feature type="topological domain" description="Extracellular" evidence="2">
    <location>
        <begin position="117"/>
        <end position="359"/>
    </location>
</feature>
<feature type="domain" description="C-type lectin" evidence="3">
    <location>
        <begin position="232"/>
        <end position="352"/>
    </location>
</feature>
<feature type="modified residue" description="Phosphotyrosine; by LYN" evidence="1">
    <location>
        <position position="7"/>
    </location>
</feature>
<feature type="modified residue" description="Phosphotyrosine; by LYN" evidence="1">
    <location>
        <position position="39"/>
    </location>
</feature>
<feature type="glycosylation site" description="N-linked (GlcNAc...) asparagine" evidence="2">
    <location>
        <position position="136"/>
    </location>
</feature>
<feature type="disulfide bond" evidence="3">
    <location>
        <begin position="233"/>
        <end position="244"/>
    </location>
</feature>
<feature type="disulfide bond" evidence="3">
    <location>
        <begin position="261"/>
        <end position="350"/>
    </location>
</feature>
<feature type="disulfide bond" evidence="3">
    <location>
        <begin position="325"/>
        <end position="342"/>
    </location>
</feature>
<feature type="sequence variant" id="VAR_033729" description="In dbSNP:rs34791102.">
    <original>P</original>
    <variation>L</variation>
    <location>
        <position position="234"/>
    </location>
</feature>
<comment type="function">
    <text evidence="1">Co-receptor of B cell receptor (BCR) that plays both positive and negative roles on B-cell functions. Recognizes the Sm/ribonucleoprotein (RNP) self-antigen ligand, and coligation of CD72 and BCR inhibits BCR signaling. Mechanistically, ligand binding leads to the recruitment of PTPN6/SHP-1 to the BCR complex which is inhibitory to BCR signaling. Also acts as a ligand for CD5 and thereby plays a critical role in maintaining regulatory T and B-cell homeostasis.</text>
</comment>
<comment type="subunit">
    <text evidence="1">Homodimer; disulfide-linked. Associates with CD5. Interacts (tyrosine phosphorylated) with PTPN6/SHP-1.</text>
</comment>
<comment type="interaction">
    <interactant intactId="EBI-307924">
        <id>P21854</id>
    </interactant>
    <interactant intactId="EBI-2512037">
        <id>O75787</id>
        <label>ATP6AP2</label>
    </interactant>
    <organismsDiffer>false</organismsDiffer>
    <experiments>3</experiments>
</comment>
<comment type="interaction">
    <interactant intactId="EBI-307924">
        <id>P21854</id>
    </interactant>
    <interactant intactId="EBI-700794">
        <id>Q13323</id>
        <label>BIK</label>
    </interactant>
    <organismsDiffer>false</organismsDiffer>
    <experiments>3</experiments>
</comment>
<comment type="interaction">
    <interactant intactId="EBI-307924">
        <id>P21854</id>
    </interactant>
    <interactant intactId="EBI-2130213">
        <id>Q99675</id>
        <label>CGRRF1</label>
    </interactant>
    <organismsDiffer>false</organismsDiffer>
    <experiments>3</experiments>
</comment>
<comment type="interaction">
    <interactant intactId="EBI-307924">
        <id>P21854</id>
    </interactant>
    <interactant intactId="EBI-740744">
        <id>O95471</id>
        <label>CLDN7</label>
    </interactant>
    <organismsDiffer>false</organismsDiffer>
    <experiments>3</experiments>
</comment>
<comment type="interaction">
    <interactant intactId="EBI-307924">
        <id>P21854</id>
    </interactant>
    <interactant intactId="EBI-6942903">
        <id>Q96BA8</id>
        <label>CREB3L1</label>
    </interactant>
    <organismsDiffer>false</organismsDiffer>
    <experiments>5</experiments>
</comment>
<comment type="interaction">
    <interactant intactId="EBI-307924">
        <id>P21854</id>
    </interactant>
    <interactant intactId="EBI-13345167">
        <id>Q8TDT2</id>
        <label>GPR152</label>
    </interactant>
    <organismsDiffer>false</organismsDiffer>
    <experiments>3</experiments>
</comment>
<comment type="interaction">
    <interactant intactId="EBI-307924">
        <id>P21854</id>
    </interactant>
    <interactant intactId="EBI-7054335">
        <id>Q8IYS0</id>
        <label>GRAMD1C</label>
    </interactant>
    <organismsDiffer>false</organismsDiffer>
    <experiments>3</experiments>
</comment>
<comment type="interaction">
    <interactant intactId="EBI-307924">
        <id>P21854</id>
    </interactant>
    <interactant intactId="EBI-2820517">
        <id>Q8TAF8</id>
        <label>LHFPL5</label>
    </interactant>
    <organismsDiffer>false</organismsDiffer>
    <experiments>3</experiments>
</comment>
<comment type="interaction">
    <interactant intactId="EBI-307924">
        <id>P21854</id>
    </interactant>
    <interactant intactId="EBI-11304917">
        <id>Q8N386</id>
        <label>LRRC25</label>
    </interactant>
    <organismsDiffer>false</organismsDiffer>
    <experiments>3</experiments>
</comment>
<comment type="interaction">
    <interactant intactId="EBI-307924">
        <id>P21854</id>
    </interactant>
    <interactant intactId="EBI-10264855">
        <id>Q8N112</id>
        <label>LSMEM2</label>
    </interactant>
    <organismsDiffer>false</organismsDiffer>
    <experiments>3</experiments>
</comment>
<comment type="interaction">
    <interactant intactId="EBI-307924">
        <id>P21854</id>
    </interactant>
    <interactant intactId="EBI-12806656">
        <id>Q96HJ5</id>
        <label>MS4A3</label>
    </interactant>
    <organismsDiffer>false</organismsDiffer>
    <experiments>3</experiments>
</comment>
<comment type="interaction">
    <interactant intactId="EBI-307924">
        <id>P21854</id>
    </interactant>
    <interactant intactId="EBI-721391">
        <id>Q9GZW8</id>
        <label>MS4A7</label>
    </interactant>
    <organismsDiffer>false</organismsDiffer>
    <experiments>3</experiments>
</comment>
<comment type="interaction">
    <interactant intactId="EBI-307924">
        <id>P21854</id>
    </interactant>
    <interactant intactId="EBI-12842334">
        <id>Q02297-10</id>
        <label>NRG1</label>
    </interactant>
    <organismsDiffer>false</organismsDiffer>
    <experiments>3</experiments>
</comment>
<comment type="interaction">
    <interactant intactId="EBI-307924">
        <id>P21854</id>
    </interactant>
    <interactant intactId="EBI-17498703">
        <id>Q9HBV2</id>
        <label>SPACA1</label>
    </interactant>
    <organismsDiffer>false</organismsDiffer>
    <experiments>3</experiments>
</comment>
<comment type="subcellular location">
    <subcellularLocation>
        <location>Membrane</location>
        <topology>Single-pass type II membrane protein</topology>
    </subcellularLocation>
</comment>
<comment type="tissue specificity">
    <text>Pre-B-cells and B-cells but not terminally differentiated plasma cells.</text>
</comment>
<comment type="PTM">
    <text evidence="1">Phosphorylated upon engagement of the B-cell receptor, probably by LYN or SYK. Phosphorylation at Tyr-7 is important for interaction with PTPN6/SHP-1.</text>
</comment>
<comment type="online information" name="Functional Glycomics Gateway - Glycan Binding">
    <link uri="http://www.functionalglycomics.org/glycomics/GBPServlet?&amp;operationType=view&amp;cbpId=cbp_hum_Ctlect_237"/>
    <text>CD72</text>
</comment>
<keyword id="KW-1015">Disulfide bond</keyword>
<keyword id="KW-0325">Glycoprotein</keyword>
<keyword id="KW-0430">Lectin</keyword>
<keyword id="KW-0472">Membrane</keyword>
<keyword id="KW-0597">Phosphoprotein</keyword>
<keyword id="KW-1267">Proteomics identification</keyword>
<keyword id="KW-0675">Receptor</keyword>
<keyword id="KW-1185">Reference proteome</keyword>
<keyword id="KW-0735">Signal-anchor</keyword>
<keyword id="KW-0812">Transmembrane</keyword>
<keyword id="KW-1133">Transmembrane helix</keyword>
<gene>
    <name type="primary">CD72</name>
</gene>
<dbReference type="EMBL" id="M54992">
    <property type="protein sequence ID" value="AAA36189.1"/>
    <property type="molecule type" value="mRNA"/>
</dbReference>
<dbReference type="EMBL" id="BC030227">
    <property type="protein sequence ID" value="AAH30227.1"/>
    <property type="molecule type" value="mRNA"/>
</dbReference>
<dbReference type="CCDS" id="CCDS6581.1"/>
<dbReference type="PIR" id="A43532">
    <property type="entry name" value="A43532"/>
</dbReference>
<dbReference type="RefSeq" id="NP_001773.1">
    <property type="nucleotide sequence ID" value="NM_001782.3"/>
</dbReference>
<dbReference type="SMR" id="P21854"/>
<dbReference type="BioGRID" id="107409">
    <property type="interactions" value="26"/>
</dbReference>
<dbReference type="FunCoup" id="P21854">
    <property type="interactions" value="556"/>
</dbReference>
<dbReference type="IntAct" id="P21854">
    <property type="interactions" value="20"/>
</dbReference>
<dbReference type="STRING" id="9606.ENSP00000259633"/>
<dbReference type="ChEMBL" id="CHEMBL5169122"/>
<dbReference type="GlyCosmos" id="P21854">
    <property type="glycosylation" value="1 site, No reported glycans"/>
</dbReference>
<dbReference type="GlyGen" id="P21854">
    <property type="glycosylation" value="1 site, 3 N-linked glycans (1 site)"/>
</dbReference>
<dbReference type="iPTMnet" id="P21854"/>
<dbReference type="PhosphoSitePlus" id="P21854"/>
<dbReference type="SwissPalm" id="P21854"/>
<dbReference type="BioMuta" id="CD72"/>
<dbReference type="DMDM" id="116029"/>
<dbReference type="MassIVE" id="P21854"/>
<dbReference type="PaxDb" id="9606-ENSP00000379980"/>
<dbReference type="PeptideAtlas" id="P21854"/>
<dbReference type="ProteomicsDB" id="53933"/>
<dbReference type="ABCD" id="P21854">
    <property type="antibodies" value="1 sequenced antibody"/>
</dbReference>
<dbReference type="Antibodypedia" id="3742">
    <property type="antibodies" value="621 antibodies from 38 providers"/>
</dbReference>
<dbReference type="DNASU" id="971"/>
<dbReference type="Ensembl" id="ENST00000259633.9">
    <property type="protein sequence ID" value="ENSP00000259633.4"/>
    <property type="gene ID" value="ENSG00000137101.14"/>
</dbReference>
<dbReference type="GeneID" id="971"/>
<dbReference type="KEGG" id="hsa:971"/>
<dbReference type="MANE-Select" id="ENST00000259633.9">
    <property type="protein sequence ID" value="ENSP00000259633.4"/>
    <property type="RefSeq nucleotide sequence ID" value="NM_001782.3"/>
    <property type="RefSeq protein sequence ID" value="NP_001773.1"/>
</dbReference>
<dbReference type="AGR" id="HGNC:1696"/>
<dbReference type="CTD" id="971"/>
<dbReference type="DisGeNET" id="971"/>
<dbReference type="GeneCards" id="CD72"/>
<dbReference type="HGNC" id="HGNC:1696">
    <property type="gene designation" value="CD72"/>
</dbReference>
<dbReference type="HPA" id="ENSG00000137101">
    <property type="expression patterns" value="Tissue enriched (lymphoid)"/>
</dbReference>
<dbReference type="MIM" id="107272">
    <property type="type" value="gene"/>
</dbReference>
<dbReference type="neXtProt" id="NX_P21854"/>
<dbReference type="OpenTargets" id="ENSG00000137101"/>
<dbReference type="PharmGKB" id="PA26235"/>
<dbReference type="VEuPathDB" id="HostDB:ENSG00000137101"/>
<dbReference type="eggNOG" id="KOG4297">
    <property type="taxonomic scope" value="Eukaryota"/>
</dbReference>
<dbReference type="GeneTree" id="ENSGT00390000003668"/>
<dbReference type="HOGENOM" id="CLU_066571_0_0_1"/>
<dbReference type="InParanoid" id="P21854"/>
<dbReference type="OMA" id="NWEDSQR"/>
<dbReference type="OrthoDB" id="8953283at2759"/>
<dbReference type="PAN-GO" id="P21854">
    <property type="GO annotations" value="1 GO annotation based on evolutionary models"/>
</dbReference>
<dbReference type="PhylomeDB" id="P21854"/>
<dbReference type="TreeFam" id="TF337121"/>
<dbReference type="PathwayCommons" id="P21854"/>
<dbReference type="Reactome" id="R-HSA-416700">
    <property type="pathway name" value="Other semaphorin interactions"/>
</dbReference>
<dbReference type="SignaLink" id="P21854"/>
<dbReference type="SIGNOR" id="P21854"/>
<dbReference type="BioGRID-ORCS" id="971">
    <property type="hits" value="14 hits in 1148 CRISPR screens"/>
</dbReference>
<dbReference type="ChiTaRS" id="CD72">
    <property type="organism name" value="human"/>
</dbReference>
<dbReference type="GenomeRNAi" id="971"/>
<dbReference type="Pharos" id="P21854">
    <property type="development level" value="Tbio"/>
</dbReference>
<dbReference type="PRO" id="PR:P21854"/>
<dbReference type="Proteomes" id="UP000005640">
    <property type="component" value="Chromosome 9"/>
</dbReference>
<dbReference type="RNAct" id="P21854">
    <property type="molecule type" value="protein"/>
</dbReference>
<dbReference type="Bgee" id="ENSG00000137101">
    <property type="expression patterns" value="Expressed in spleen and 111 other cell types or tissues"/>
</dbReference>
<dbReference type="ExpressionAtlas" id="P21854">
    <property type="expression patterns" value="baseline and differential"/>
</dbReference>
<dbReference type="GO" id="GO:0005886">
    <property type="term" value="C:plasma membrane"/>
    <property type="evidence" value="ECO:0000314"/>
    <property type="project" value="UniProtKB"/>
</dbReference>
<dbReference type="GO" id="GO:0030246">
    <property type="term" value="F:carbohydrate binding"/>
    <property type="evidence" value="ECO:0007669"/>
    <property type="project" value="UniProtKB-KW"/>
</dbReference>
<dbReference type="GO" id="GO:0005102">
    <property type="term" value="F:signaling receptor binding"/>
    <property type="evidence" value="ECO:0000304"/>
    <property type="project" value="ProtInc"/>
</dbReference>
<dbReference type="GO" id="GO:0004888">
    <property type="term" value="F:transmembrane signaling receptor activity"/>
    <property type="evidence" value="ECO:0000314"/>
    <property type="project" value="UniProt"/>
</dbReference>
<dbReference type="GO" id="GO:0007155">
    <property type="term" value="P:cell adhesion"/>
    <property type="evidence" value="ECO:0000304"/>
    <property type="project" value="ProtInc"/>
</dbReference>
<dbReference type="GO" id="GO:0050859">
    <property type="term" value="P:negative regulation of B cell receptor signaling pathway"/>
    <property type="evidence" value="ECO:0000314"/>
    <property type="project" value="UniProt"/>
</dbReference>
<dbReference type="FunFam" id="3.10.100.10:FF:000113">
    <property type="entry name" value="CD72 molecule"/>
    <property type="match status" value="1"/>
</dbReference>
<dbReference type="Gene3D" id="3.10.100.10">
    <property type="entry name" value="Mannose-Binding Protein A, subunit A"/>
    <property type="match status" value="1"/>
</dbReference>
<dbReference type="InterPro" id="IPR001304">
    <property type="entry name" value="C-type_lectin-like"/>
</dbReference>
<dbReference type="InterPro" id="IPR016186">
    <property type="entry name" value="C-type_lectin-like/link_sf"/>
</dbReference>
<dbReference type="InterPro" id="IPR039689">
    <property type="entry name" value="CD72"/>
</dbReference>
<dbReference type="InterPro" id="IPR016187">
    <property type="entry name" value="CTDL_fold"/>
</dbReference>
<dbReference type="PANTHER" id="PTHR15028:SF6">
    <property type="entry name" value="B-CELL DIFFERENTIATION ANTIGEN CD72"/>
    <property type="match status" value="1"/>
</dbReference>
<dbReference type="PANTHER" id="PTHR15028">
    <property type="entry name" value="CD72-RELATED"/>
    <property type="match status" value="1"/>
</dbReference>
<dbReference type="Pfam" id="PF00059">
    <property type="entry name" value="Lectin_C"/>
    <property type="match status" value="1"/>
</dbReference>
<dbReference type="SMART" id="SM00034">
    <property type="entry name" value="CLECT"/>
    <property type="match status" value="1"/>
</dbReference>
<dbReference type="SUPFAM" id="SSF56436">
    <property type="entry name" value="C-type lectin-like"/>
    <property type="match status" value="1"/>
</dbReference>
<dbReference type="PROSITE" id="PS50041">
    <property type="entry name" value="C_TYPE_LECTIN_2"/>
    <property type="match status" value="1"/>
</dbReference>
<name>CD72_HUMAN</name>
<organism>
    <name type="scientific">Homo sapiens</name>
    <name type="common">Human</name>
    <dbReference type="NCBI Taxonomy" id="9606"/>
    <lineage>
        <taxon>Eukaryota</taxon>
        <taxon>Metazoa</taxon>
        <taxon>Chordata</taxon>
        <taxon>Craniata</taxon>
        <taxon>Vertebrata</taxon>
        <taxon>Euteleostomi</taxon>
        <taxon>Mammalia</taxon>
        <taxon>Eutheria</taxon>
        <taxon>Euarchontoglires</taxon>
        <taxon>Primates</taxon>
        <taxon>Haplorrhini</taxon>
        <taxon>Catarrhini</taxon>
        <taxon>Hominidae</taxon>
        <taxon>Homo</taxon>
    </lineage>
</organism>
<protein>
    <recommendedName>
        <fullName>B-cell differentiation antigen CD72</fullName>
    </recommendedName>
    <alternativeName>
        <fullName>Lyb-2</fullName>
    </alternativeName>
    <cdAntigenName>CD72</cdAntigenName>
</protein>
<reference key="1">
    <citation type="journal article" date="1990" name="J. Immunol.">
        <title>Identification of a human protein homologous to the mouse Lyb-2 B cell differentiation antigen and sequence of the corresponding cDNA.</title>
        <authorList>
            <person name="von Hoegen I."/>
            <person name="Nakayama E."/>
            <person name="Parnes J.R."/>
        </authorList>
    </citation>
    <scope>NUCLEOTIDE SEQUENCE [MRNA]</scope>
</reference>
<reference key="2">
    <citation type="journal article" date="2004" name="Genome Res.">
        <title>The status, quality, and expansion of the NIH full-length cDNA project: the Mammalian Gene Collection (MGC).</title>
        <authorList>
            <consortium name="The MGC Project Team"/>
        </authorList>
    </citation>
    <scope>NUCLEOTIDE SEQUENCE [LARGE SCALE MRNA]</scope>
    <source>
        <tissue>Pancreas</tissue>
        <tissue>Spleen</tissue>
    </source>
</reference>
<proteinExistence type="evidence at protein level"/>
<evidence type="ECO:0000250" key="1">
    <source>
        <dbReference type="UniProtKB" id="P21855"/>
    </source>
</evidence>
<evidence type="ECO:0000255" key="2"/>
<evidence type="ECO:0000255" key="3">
    <source>
        <dbReference type="PROSITE-ProRule" id="PRU00040"/>
    </source>
</evidence>
<accession>P21854</accession>
<sequence>MAEAITYADLRFVKAPLKKSISSRLGQDPGADDDGEITYENVQVPAVLGVPSSLASSVLGDKAAVKSEQPTASWRAVTSPAVGRILPCRTTCLRYLLLGLLLTCLLLGVTAICLGVRYLQVSQQLQQTNRVLEVTNSSLRQQLRLKITQLGQSAEDLQGSRRELAQSQEALQVEQRAHQAAEGQLQACQADRQKTKETLQSEEQQRRALEQKLSNMENRLKPFFTCGSADTCCPSGWIMHQKSCFYISLTSKNWQESQKQCETLSSKLATFSEIYPQSHSYYFLNSLLPNGGSGNSYWTGLSSNKDWKLTDDTQRTRTYAQSSKCNKVHKTWSWWTLESESCRSSLPYICEMTAFRFPD</sequence>